<reference key="1">
    <citation type="journal article" date="1998" name="J. Bacteriol.">
        <title>Purification of the pyruvate dehydrogenase multienzyme complex of Zymomonas mobilis and identification and sequence analysis of the corresponding genes.</title>
        <authorList>
            <person name="Neveling U."/>
            <person name="Klasen R."/>
            <person name="Bringer-Meyer S."/>
            <person name="Sahm H."/>
        </authorList>
    </citation>
    <scope>NUCLEOTIDE SEQUENCE [GENOMIC DNA]</scope>
    <source>
        <strain>ATCC 29191 / DSM 3580 / JCM 10190 / CECT 560 / NBRC 13756 / NCIMB 11199 / NRRL B-4490 / ZM6</strain>
    </source>
</reference>
<reference key="2">
    <citation type="journal article" date="2005" name="Nat. Biotechnol.">
        <title>The genome sequence of the ethanologenic bacterium Zymomonas mobilis ZM4.</title>
        <authorList>
            <person name="Seo J.-S."/>
            <person name="Chong H."/>
            <person name="Park H.S."/>
            <person name="Yoon K.-O."/>
            <person name="Jung C."/>
            <person name="Kim J.J."/>
            <person name="Hong J.H."/>
            <person name="Kim H."/>
            <person name="Kim J.-H."/>
            <person name="Kil J.-I."/>
            <person name="Park C.J."/>
            <person name="Oh H.-M."/>
            <person name="Lee J.-S."/>
            <person name="Jin S.-J."/>
            <person name="Um H.-W."/>
            <person name="Lee H.-J."/>
            <person name="Oh S.-J."/>
            <person name="Kim J.Y."/>
            <person name="Kang H.L."/>
            <person name="Lee S.Y."/>
            <person name="Lee K.J."/>
            <person name="Kang H.S."/>
        </authorList>
    </citation>
    <scope>NUCLEOTIDE SEQUENCE [LARGE SCALE GENOMIC DNA]</scope>
    <source>
        <strain>ATCC 31821 / ZM4 / CP4</strain>
    </source>
</reference>
<accession>O66119</accession>
<accession>Q5NQ71</accession>
<comment type="function">
    <text evidence="1">The pyruvate dehydrogenase complex catalyzes the overall conversion of pyruvate to acetyl-CoA and CO(2). It contains multiple copies of three enzymatic components: pyruvate dehydrogenase (E1), dihydrolipoamide acetyltransferase (E2) and lipoamide dehydrogenase (E3) (By similarity).</text>
</comment>
<comment type="catalytic activity">
    <reaction>
        <text>N(6)-[(R)-dihydrolipoyl]-L-lysyl-[protein] + acetyl-CoA = N(6)-[(R)-S(8)-acetyldihydrolipoyl]-L-lysyl-[protein] + CoA</text>
        <dbReference type="Rhea" id="RHEA:17017"/>
        <dbReference type="Rhea" id="RHEA-COMP:10475"/>
        <dbReference type="Rhea" id="RHEA-COMP:10478"/>
        <dbReference type="ChEBI" id="CHEBI:57287"/>
        <dbReference type="ChEBI" id="CHEBI:57288"/>
        <dbReference type="ChEBI" id="CHEBI:83100"/>
        <dbReference type="ChEBI" id="CHEBI:83111"/>
        <dbReference type="EC" id="2.3.1.12"/>
    </reaction>
</comment>
<comment type="cofactor">
    <cofactor evidence="1">
        <name>(R)-lipoate</name>
        <dbReference type="ChEBI" id="CHEBI:83088"/>
    </cofactor>
    <text evidence="1">Binds 1 lipoyl cofactor covalently.</text>
</comment>
<comment type="subunit">
    <text evidence="1">Forms a 24-polypeptide structural core with octahedral symmetry.</text>
</comment>
<comment type="similarity">
    <text evidence="6">Belongs to the 2-oxoacid dehydrogenase family.</text>
</comment>
<name>ODP2_ZYMMO</name>
<proteinExistence type="inferred from homology"/>
<protein>
    <recommendedName>
        <fullName>Dihydrolipoyllysine-residue acetyltransferase component of pyruvate dehydrogenase complex</fullName>
        <ecNumber>2.3.1.12</ecNumber>
    </recommendedName>
    <alternativeName>
        <fullName>Dihydrolipoamide acetyltransferase component of pyruvate dehydrogenase complex</fullName>
    </alternativeName>
    <alternativeName>
        <fullName>E2</fullName>
    </alternativeName>
</protein>
<gene>
    <name type="primary">pdhC</name>
    <name type="synonym">pdhB</name>
    <name type="ordered locus">ZMO0510</name>
</gene>
<keyword id="KW-0012">Acyltransferase</keyword>
<keyword id="KW-0450">Lipoyl</keyword>
<keyword id="KW-1185">Reference proteome</keyword>
<keyword id="KW-0808">Transferase</keyword>
<dbReference type="EC" id="2.3.1.12"/>
<dbReference type="EMBL" id="X93605">
    <property type="protein sequence ID" value="CAA63808.1"/>
    <property type="molecule type" value="Genomic_DNA"/>
</dbReference>
<dbReference type="EMBL" id="AE008692">
    <property type="protein sequence ID" value="AAV89134.1"/>
    <property type="molecule type" value="Genomic_DNA"/>
</dbReference>
<dbReference type="RefSeq" id="WP_011240414.1">
    <property type="nucleotide sequence ID" value="NZ_CP035711.1"/>
</dbReference>
<dbReference type="SMR" id="O66119"/>
<dbReference type="STRING" id="264203.ZMO0510"/>
<dbReference type="KEGG" id="zmo:ZMO0510"/>
<dbReference type="eggNOG" id="COG0508">
    <property type="taxonomic scope" value="Bacteria"/>
</dbReference>
<dbReference type="HOGENOM" id="CLU_016733_10_2_5"/>
<dbReference type="Proteomes" id="UP000001173">
    <property type="component" value="Chromosome"/>
</dbReference>
<dbReference type="GO" id="GO:0045254">
    <property type="term" value="C:pyruvate dehydrogenase complex"/>
    <property type="evidence" value="ECO:0007669"/>
    <property type="project" value="InterPro"/>
</dbReference>
<dbReference type="GO" id="GO:0004742">
    <property type="term" value="F:dihydrolipoyllysine-residue acetyltransferase activity"/>
    <property type="evidence" value="ECO:0007669"/>
    <property type="project" value="UniProtKB-EC"/>
</dbReference>
<dbReference type="GO" id="GO:0006086">
    <property type="term" value="P:pyruvate decarboxylation to acetyl-CoA"/>
    <property type="evidence" value="ECO:0007669"/>
    <property type="project" value="InterPro"/>
</dbReference>
<dbReference type="CDD" id="cd06849">
    <property type="entry name" value="lipoyl_domain"/>
    <property type="match status" value="1"/>
</dbReference>
<dbReference type="FunFam" id="2.40.50.100:FF:000010">
    <property type="entry name" value="Acetyltransferase component of pyruvate dehydrogenase complex"/>
    <property type="match status" value="1"/>
</dbReference>
<dbReference type="Gene3D" id="2.40.50.100">
    <property type="match status" value="1"/>
</dbReference>
<dbReference type="Gene3D" id="3.30.559.10">
    <property type="entry name" value="Chloramphenicol acetyltransferase-like domain"/>
    <property type="match status" value="1"/>
</dbReference>
<dbReference type="Gene3D" id="4.10.320.10">
    <property type="entry name" value="E3-binding domain"/>
    <property type="match status" value="1"/>
</dbReference>
<dbReference type="InterPro" id="IPR003016">
    <property type="entry name" value="2-oxoA_DH_lipoyl-BS"/>
</dbReference>
<dbReference type="InterPro" id="IPR001078">
    <property type="entry name" value="2-oxoacid_DH_actylTfrase"/>
</dbReference>
<dbReference type="InterPro" id="IPR000089">
    <property type="entry name" value="Biotin_lipoyl"/>
</dbReference>
<dbReference type="InterPro" id="IPR023213">
    <property type="entry name" value="CAT-like_dom_sf"/>
</dbReference>
<dbReference type="InterPro" id="IPR045257">
    <property type="entry name" value="E2/Pdx1"/>
</dbReference>
<dbReference type="InterPro" id="IPR036625">
    <property type="entry name" value="E3-bd_dom_sf"/>
</dbReference>
<dbReference type="InterPro" id="IPR006257">
    <property type="entry name" value="LAT1"/>
</dbReference>
<dbReference type="InterPro" id="IPR004167">
    <property type="entry name" value="PSBD"/>
</dbReference>
<dbReference type="InterPro" id="IPR011053">
    <property type="entry name" value="Single_hybrid_motif"/>
</dbReference>
<dbReference type="NCBIfam" id="TIGR01349">
    <property type="entry name" value="PDHac_trf_mito"/>
    <property type="match status" value="1"/>
</dbReference>
<dbReference type="PANTHER" id="PTHR23151">
    <property type="entry name" value="DIHYDROLIPOAMIDE ACETYL/SUCCINYL-TRANSFERASE-RELATED"/>
    <property type="match status" value="1"/>
</dbReference>
<dbReference type="PANTHER" id="PTHR23151:SF90">
    <property type="entry name" value="DIHYDROLIPOYLLYSINE-RESIDUE ACETYLTRANSFERASE COMPONENT OF PYRUVATE DEHYDROGENASE COMPLEX, MITOCHONDRIAL-RELATED"/>
    <property type="match status" value="1"/>
</dbReference>
<dbReference type="Pfam" id="PF00198">
    <property type="entry name" value="2-oxoacid_dh"/>
    <property type="match status" value="1"/>
</dbReference>
<dbReference type="Pfam" id="PF00364">
    <property type="entry name" value="Biotin_lipoyl"/>
    <property type="match status" value="1"/>
</dbReference>
<dbReference type="Pfam" id="PF02817">
    <property type="entry name" value="E3_binding"/>
    <property type="match status" value="1"/>
</dbReference>
<dbReference type="SUPFAM" id="SSF52777">
    <property type="entry name" value="CoA-dependent acyltransferases"/>
    <property type="match status" value="1"/>
</dbReference>
<dbReference type="SUPFAM" id="SSF47005">
    <property type="entry name" value="Peripheral subunit-binding domain of 2-oxo acid dehydrogenase complex"/>
    <property type="match status" value="1"/>
</dbReference>
<dbReference type="SUPFAM" id="SSF51230">
    <property type="entry name" value="Single hybrid motif"/>
    <property type="match status" value="1"/>
</dbReference>
<dbReference type="PROSITE" id="PS50968">
    <property type="entry name" value="BIOTINYL_LIPOYL"/>
    <property type="match status" value="1"/>
</dbReference>
<dbReference type="PROSITE" id="PS00189">
    <property type="entry name" value="LIPOYL"/>
    <property type="match status" value="1"/>
</dbReference>
<dbReference type="PROSITE" id="PS51826">
    <property type="entry name" value="PSBD"/>
    <property type="match status" value="1"/>
</dbReference>
<evidence type="ECO:0000250" key="1"/>
<evidence type="ECO:0000255" key="2"/>
<evidence type="ECO:0000255" key="3">
    <source>
        <dbReference type="PROSITE-ProRule" id="PRU01066"/>
    </source>
</evidence>
<evidence type="ECO:0000255" key="4">
    <source>
        <dbReference type="PROSITE-ProRule" id="PRU01170"/>
    </source>
</evidence>
<evidence type="ECO:0000256" key="5">
    <source>
        <dbReference type="SAM" id="MobiDB-lite"/>
    </source>
</evidence>
<evidence type="ECO:0000305" key="6"/>
<sequence>MSIEVKMPALSPTMTEGTLAKWLVKEGDAVKAGDILAEIETDKAIMEFETVDAGIIAKILVPEGSENIAVGQVIAVMAEAGEDVSQVAASASSQISEPSEKADVAQKETADSETISIDASLDKAISNAGYGNKTENMTASYQEKAGRIKASPLAKRLAKKNHVDLKQVNGSGPHGRIIKADIEAFIAEANQASSNPSVSTPEASGKITHDTPHNSIKLSNMRRVIARRLTESKQNIPHIYLTVDVQMDALLKLRSELNESLAVQNIKISVNDMLIKAQALALKATPNVNVAFDGDQMLQFSQADISVAVSVEGGLITPILKQADTKSLSALSVEMKELIARAREGRLQPQEYQGGTSSISNMGMFGIKQFNAVINPPQASILAIGSGERRPWVIDDAITIATVATITGSFDHRVIDGADAAAFMSAFKHLVEKPLGILAQ</sequence>
<feature type="chain" id="PRO_0000162296" description="Dihydrolipoyllysine-residue acetyltransferase component of pyruvate dehydrogenase complex">
    <location>
        <begin position="1"/>
        <end position="440"/>
    </location>
</feature>
<feature type="domain" description="Lipoyl-binding" evidence="3">
    <location>
        <begin position="2"/>
        <end position="78"/>
    </location>
</feature>
<feature type="domain" description="Peripheral subunit-binding (PSBD)" evidence="4">
    <location>
        <begin position="149"/>
        <end position="186"/>
    </location>
</feature>
<feature type="region of interest" description="Disordered" evidence="5">
    <location>
        <begin position="91"/>
        <end position="113"/>
    </location>
</feature>
<feature type="region of interest" description="Disordered" evidence="5">
    <location>
        <begin position="192"/>
        <end position="214"/>
    </location>
</feature>
<feature type="compositionally biased region" description="Basic and acidic residues" evidence="5">
    <location>
        <begin position="98"/>
        <end position="110"/>
    </location>
</feature>
<feature type="compositionally biased region" description="Polar residues" evidence="5">
    <location>
        <begin position="192"/>
        <end position="202"/>
    </location>
</feature>
<feature type="active site" evidence="2">
    <location>
        <position position="412"/>
    </location>
</feature>
<feature type="modified residue" description="N6-lipoyllysine" evidence="3">
    <location>
        <position position="43"/>
    </location>
</feature>
<feature type="sequence conflict" description="In Ref. 1; CAA63808." evidence="6" ref="1">
    <original>N</original>
    <variation>S</variation>
    <location>
        <position position="169"/>
    </location>
</feature>
<feature type="sequence conflict" description="In Ref. 1; CAA63808." evidence="6" ref="1">
    <original>IAE</original>
    <variation>VTG</variation>
    <location>
        <begin position="186"/>
        <end position="188"/>
    </location>
</feature>
<feature type="sequence conflict" description="In Ref. 1; CAA63808." evidence="6" ref="1">
    <original>A</original>
    <variation>V</variation>
    <location>
        <position position="203"/>
    </location>
</feature>
<organism>
    <name type="scientific">Zymomonas mobilis subsp. mobilis (strain ATCC 31821 / ZM4 / CP4)</name>
    <dbReference type="NCBI Taxonomy" id="264203"/>
    <lineage>
        <taxon>Bacteria</taxon>
        <taxon>Pseudomonadati</taxon>
        <taxon>Pseudomonadota</taxon>
        <taxon>Alphaproteobacteria</taxon>
        <taxon>Sphingomonadales</taxon>
        <taxon>Zymomonadaceae</taxon>
        <taxon>Zymomonas</taxon>
    </lineage>
</organism>